<feature type="chain" id="PRO_0000329926" description="Polyribonucleotide nucleotidyltransferase">
    <location>
        <begin position="1"/>
        <end position="695"/>
    </location>
</feature>
<feature type="domain" description="KH" evidence="1">
    <location>
        <begin position="554"/>
        <end position="613"/>
    </location>
</feature>
<feature type="domain" description="S1 motif" evidence="1">
    <location>
        <begin position="623"/>
        <end position="690"/>
    </location>
</feature>
<feature type="binding site" evidence="1">
    <location>
        <position position="488"/>
    </location>
    <ligand>
        <name>Mg(2+)</name>
        <dbReference type="ChEBI" id="CHEBI:18420"/>
    </ligand>
</feature>
<feature type="binding site" evidence="1">
    <location>
        <position position="494"/>
    </location>
    <ligand>
        <name>Mg(2+)</name>
        <dbReference type="ChEBI" id="CHEBI:18420"/>
    </ligand>
</feature>
<reference key="1">
    <citation type="journal article" date="2007" name="Curr. Biol.">
        <title>Reduced genome of the thioautotrophic intracellular symbiont in a deep-sea clam, Calyptogena okutanii.</title>
        <authorList>
            <person name="Kuwahara H."/>
            <person name="Yoshida T."/>
            <person name="Takaki Y."/>
            <person name="Shimamura S."/>
            <person name="Nishi S."/>
            <person name="Harada M."/>
            <person name="Matsuyama K."/>
            <person name="Takishita K."/>
            <person name="Kawato M."/>
            <person name="Uematsu K."/>
            <person name="Fujiwara Y."/>
            <person name="Sato T."/>
            <person name="Kato C."/>
            <person name="Kitagawa M."/>
            <person name="Kato I."/>
            <person name="Maruyama T."/>
        </authorList>
    </citation>
    <scope>NUCLEOTIDE SEQUENCE [LARGE SCALE GENOMIC DNA]</scope>
    <source>
        <strain>HA</strain>
    </source>
</reference>
<proteinExistence type="inferred from homology"/>
<sequence>MNIKTKSFTMGKHIVTLETGRIARQAHGAVLASMDDTQVLVTVVSSKETRPGQDFFPLSVDYIEKTYSTGKIPGSFLKREARPSEKETLTSRLIDRTIRPLFPNGFMNEIQVLITVVSANSEVNPDIISMLGVSAALSISGVPFSRPIGGSRVGYSNGEYILNPTYIELTNSDLDMVVAGTDEAVLMVESEANELSEEIMLGAVVYAHEQYQVAITNIAEFTTEVGMQKWDWIAPITNEVLLSDIKSKFGKEINKAYQIKEKLDRHAKIDNIRMAAIEALENENENGNSAEEVSKYFKEVEKSTVRERILNNDSRIDGRNNETVRELKIETGILKNTHGSALFTRGETQALVVTTLGPKSDAQLIEKLESPERQNNYFLLHYNFPPYCVGETGRLATIKRREIGHGHLARRGITACLPSIEEFPYTVRVVSEITESNGSSSMASVCGSSLSLMDAGVPIKAPIAGIAMGLVKENDRFTVLTDILGDEDHLGDMDFKVAGTSRGVNALQMDIKIQSITHEIMEIALKQAKEARLNILGQMNQVICEPNTSNKNTPKTTIIKIKTDKIRDLIGRGGETIKGIISTSCASIDVDDSGNVNIFSNNQKSFDTAVQMVKDVTAIPEVNKVYTGKVVKIVEFGAFINIMPNQDGLLHISEISHERVEKVKDHIREGDKIDVKVIGLDRGRIKLSRKVLLEK</sequence>
<protein>
    <recommendedName>
        <fullName evidence="1">Polyribonucleotide nucleotidyltransferase</fullName>
        <ecNumber evidence="1">2.7.7.8</ecNumber>
    </recommendedName>
    <alternativeName>
        <fullName evidence="1">Polynucleotide phosphorylase</fullName>
        <shortName evidence="1">PNPase</shortName>
    </alternativeName>
</protein>
<comment type="function">
    <text evidence="1">Involved in mRNA degradation. Catalyzes the phosphorolysis of single-stranded polyribonucleotides processively in the 3'- to 5'-direction.</text>
</comment>
<comment type="catalytic activity">
    <reaction evidence="1">
        <text>RNA(n+1) + phosphate = RNA(n) + a ribonucleoside 5'-diphosphate</text>
        <dbReference type="Rhea" id="RHEA:22096"/>
        <dbReference type="Rhea" id="RHEA-COMP:14527"/>
        <dbReference type="Rhea" id="RHEA-COMP:17342"/>
        <dbReference type="ChEBI" id="CHEBI:43474"/>
        <dbReference type="ChEBI" id="CHEBI:57930"/>
        <dbReference type="ChEBI" id="CHEBI:140395"/>
        <dbReference type="EC" id="2.7.7.8"/>
    </reaction>
</comment>
<comment type="cofactor">
    <cofactor evidence="1">
        <name>Mg(2+)</name>
        <dbReference type="ChEBI" id="CHEBI:18420"/>
    </cofactor>
</comment>
<comment type="subunit">
    <text evidence="1">Component of the RNA degradosome, which is a multiprotein complex involved in RNA processing and mRNA degradation.</text>
</comment>
<comment type="subcellular location">
    <subcellularLocation>
        <location evidence="1">Cytoplasm</location>
    </subcellularLocation>
</comment>
<comment type="similarity">
    <text evidence="1">Belongs to the polyribonucleotide nucleotidyltransferase family.</text>
</comment>
<keyword id="KW-0963">Cytoplasm</keyword>
<keyword id="KW-0460">Magnesium</keyword>
<keyword id="KW-0479">Metal-binding</keyword>
<keyword id="KW-0548">Nucleotidyltransferase</keyword>
<keyword id="KW-1185">Reference proteome</keyword>
<keyword id="KW-0694">RNA-binding</keyword>
<keyword id="KW-0808">Transferase</keyword>
<accession>A5CWW8</accession>
<name>PNP_VESOH</name>
<organism>
    <name type="scientific">Vesicomyosocius okutanii subsp. Calyptogena okutanii (strain HA)</name>
    <dbReference type="NCBI Taxonomy" id="412965"/>
    <lineage>
        <taxon>Bacteria</taxon>
        <taxon>Pseudomonadati</taxon>
        <taxon>Pseudomonadota</taxon>
        <taxon>Gammaproteobacteria</taxon>
        <taxon>Candidatus Pseudothioglobaceae</taxon>
        <taxon>Candidatus Vesicomyosocius</taxon>
    </lineage>
</organism>
<gene>
    <name evidence="1" type="primary">pnp</name>
    <name type="ordered locus">COSY_0426</name>
</gene>
<dbReference type="EC" id="2.7.7.8" evidence="1"/>
<dbReference type="EMBL" id="AP009247">
    <property type="protein sequence ID" value="BAF61545.1"/>
    <property type="molecule type" value="Genomic_DNA"/>
</dbReference>
<dbReference type="SMR" id="A5CWW8"/>
<dbReference type="STRING" id="412965.COSY_0426"/>
<dbReference type="KEGG" id="vok:COSY_0426"/>
<dbReference type="eggNOG" id="COG1185">
    <property type="taxonomic scope" value="Bacteria"/>
</dbReference>
<dbReference type="HOGENOM" id="CLU_004217_2_2_6"/>
<dbReference type="Proteomes" id="UP000000247">
    <property type="component" value="Chromosome"/>
</dbReference>
<dbReference type="GO" id="GO:0005829">
    <property type="term" value="C:cytosol"/>
    <property type="evidence" value="ECO:0007669"/>
    <property type="project" value="TreeGrafter"/>
</dbReference>
<dbReference type="GO" id="GO:0000175">
    <property type="term" value="F:3'-5'-RNA exonuclease activity"/>
    <property type="evidence" value="ECO:0007669"/>
    <property type="project" value="TreeGrafter"/>
</dbReference>
<dbReference type="GO" id="GO:0000287">
    <property type="term" value="F:magnesium ion binding"/>
    <property type="evidence" value="ECO:0007669"/>
    <property type="project" value="UniProtKB-UniRule"/>
</dbReference>
<dbReference type="GO" id="GO:0004654">
    <property type="term" value="F:polyribonucleotide nucleotidyltransferase activity"/>
    <property type="evidence" value="ECO:0007669"/>
    <property type="project" value="UniProtKB-UniRule"/>
</dbReference>
<dbReference type="GO" id="GO:0003723">
    <property type="term" value="F:RNA binding"/>
    <property type="evidence" value="ECO:0007669"/>
    <property type="project" value="UniProtKB-UniRule"/>
</dbReference>
<dbReference type="GO" id="GO:0006402">
    <property type="term" value="P:mRNA catabolic process"/>
    <property type="evidence" value="ECO:0007669"/>
    <property type="project" value="UniProtKB-UniRule"/>
</dbReference>
<dbReference type="GO" id="GO:0006396">
    <property type="term" value="P:RNA processing"/>
    <property type="evidence" value="ECO:0007669"/>
    <property type="project" value="InterPro"/>
</dbReference>
<dbReference type="CDD" id="cd02393">
    <property type="entry name" value="KH-I_PNPase"/>
    <property type="match status" value="1"/>
</dbReference>
<dbReference type="CDD" id="cd11363">
    <property type="entry name" value="RNase_PH_PNPase_1"/>
    <property type="match status" value="1"/>
</dbReference>
<dbReference type="CDD" id="cd11364">
    <property type="entry name" value="RNase_PH_PNPase_2"/>
    <property type="match status" value="1"/>
</dbReference>
<dbReference type="CDD" id="cd04472">
    <property type="entry name" value="S1_PNPase"/>
    <property type="match status" value="1"/>
</dbReference>
<dbReference type="FunFam" id="3.30.1370.10:FF:000001">
    <property type="entry name" value="Polyribonucleotide nucleotidyltransferase"/>
    <property type="match status" value="1"/>
</dbReference>
<dbReference type="FunFam" id="3.30.230.70:FF:000001">
    <property type="entry name" value="Polyribonucleotide nucleotidyltransferase"/>
    <property type="match status" value="1"/>
</dbReference>
<dbReference type="FunFam" id="3.30.230.70:FF:000002">
    <property type="entry name" value="Polyribonucleotide nucleotidyltransferase"/>
    <property type="match status" value="1"/>
</dbReference>
<dbReference type="FunFam" id="2.40.50.140:FF:000189">
    <property type="entry name" value="Polyribonucleotide nucleotidyltransferase, putative"/>
    <property type="match status" value="1"/>
</dbReference>
<dbReference type="Gene3D" id="3.30.230.70">
    <property type="entry name" value="GHMP Kinase, N-terminal domain"/>
    <property type="match status" value="2"/>
</dbReference>
<dbReference type="Gene3D" id="3.30.1370.10">
    <property type="entry name" value="K Homology domain, type 1"/>
    <property type="match status" value="1"/>
</dbReference>
<dbReference type="Gene3D" id="2.40.50.140">
    <property type="entry name" value="Nucleic acid-binding proteins"/>
    <property type="match status" value="1"/>
</dbReference>
<dbReference type="HAMAP" id="MF_01595">
    <property type="entry name" value="PNPase"/>
    <property type="match status" value="1"/>
</dbReference>
<dbReference type="InterPro" id="IPR001247">
    <property type="entry name" value="ExoRNase_PH_dom1"/>
</dbReference>
<dbReference type="InterPro" id="IPR015847">
    <property type="entry name" value="ExoRNase_PH_dom2"/>
</dbReference>
<dbReference type="InterPro" id="IPR036345">
    <property type="entry name" value="ExoRNase_PH_dom2_sf"/>
</dbReference>
<dbReference type="InterPro" id="IPR004087">
    <property type="entry name" value="KH_dom"/>
</dbReference>
<dbReference type="InterPro" id="IPR004088">
    <property type="entry name" value="KH_dom_type_1"/>
</dbReference>
<dbReference type="InterPro" id="IPR036612">
    <property type="entry name" value="KH_dom_type_1_sf"/>
</dbReference>
<dbReference type="InterPro" id="IPR012340">
    <property type="entry name" value="NA-bd_OB-fold"/>
</dbReference>
<dbReference type="InterPro" id="IPR012162">
    <property type="entry name" value="PNPase"/>
</dbReference>
<dbReference type="InterPro" id="IPR027408">
    <property type="entry name" value="PNPase/RNase_PH_dom_sf"/>
</dbReference>
<dbReference type="InterPro" id="IPR015848">
    <property type="entry name" value="PNPase_PH_RNA-bd_bac/org-type"/>
</dbReference>
<dbReference type="InterPro" id="IPR020568">
    <property type="entry name" value="Ribosomal_Su5_D2-typ_SF"/>
</dbReference>
<dbReference type="InterPro" id="IPR003029">
    <property type="entry name" value="S1_domain"/>
</dbReference>
<dbReference type="NCBIfam" id="TIGR03591">
    <property type="entry name" value="polynuc_phos"/>
    <property type="match status" value="1"/>
</dbReference>
<dbReference type="NCBIfam" id="NF008805">
    <property type="entry name" value="PRK11824.1"/>
    <property type="match status" value="1"/>
</dbReference>
<dbReference type="PANTHER" id="PTHR11252">
    <property type="entry name" value="POLYRIBONUCLEOTIDE NUCLEOTIDYLTRANSFERASE"/>
    <property type="match status" value="1"/>
</dbReference>
<dbReference type="PANTHER" id="PTHR11252:SF0">
    <property type="entry name" value="POLYRIBONUCLEOTIDE NUCLEOTIDYLTRANSFERASE 1, MITOCHONDRIAL"/>
    <property type="match status" value="1"/>
</dbReference>
<dbReference type="Pfam" id="PF00013">
    <property type="entry name" value="KH_1"/>
    <property type="match status" value="1"/>
</dbReference>
<dbReference type="Pfam" id="PF03726">
    <property type="entry name" value="PNPase"/>
    <property type="match status" value="1"/>
</dbReference>
<dbReference type="Pfam" id="PF01138">
    <property type="entry name" value="RNase_PH"/>
    <property type="match status" value="2"/>
</dbReference>
<dbReference type="Pfam" id="PF03725">
    <property type="entry name" value="RNase_PH_C"/>
    <property type="match status" value="2"/>
</dbReference>
<dbReference type="Pfam" id="PF00575">
    <property type="entry name" value="S1"/>
    <property type="match status" value="1"/>
</dbReference>
<dbReference type="PIRSF" id="PIRSF005499">
    <property type="entry name" value="PNPase"/>
    <property type="match status" value="1"/>
</dbReference>
<dbReference type="SMART" id="SM00322">
    <property type="entry name" value="KH"/>
    <property type="match status" value="1"/>
</dbReference>
<dbReference type="SMART" id="SM00316">
    <property type="entry name" value="S1"/>
    <property type="match status" value="1"/>
</dbReference>
<dbReference type="SUPFAM" id="SSF54791">
    <property type="entry name" value="Eukaryotic type KH-domain (KH-domain type I)"/>
    <property type="match status" value="1"/>
</dbReference>
<dbReference type="SUPFAM" id="SSF50249">
    <property type="entry name" value="Nucleic acid-binding proteins"/>
    <property type="match status" value="1"/>
</dbReference>
<dbReference type="SUPFAM" id="SSF55666">
    <property type="entry name" value="Ribonuclease PH domain 2-like"/>
    <property type="match status" value="2"/>
</dbReference>
<dbReference type="SUPFAM" id="SSF54211">
    <property type="entry name" value="Ribosomal protein S5 domain 2-like"/>
    <property type="match status" value="2"/>
</dbReference>
<dbReference type="PROSITE" id="PS50084">
    <property type="entry name" value="KH_TYPE_1"/>
    <property type="match status" value="1"/>
</dbReference>
<dbReference type="PROSITE" id="PS50126">
    <property type="entry name" value="S1"/>
    <property type="match status" value="1"/>
</dbReference>
<evidence type="ECO:0000255" key="1">
    <source>
        <dbReference type="HAMAP-Rule" id="MF_01595"/>
    </source>
</evidence>